<organism>
    <name type="scientific">Aspergillus fumigatus (strain ATCC MYA-4609 / CBS 101355 / FGSC A1100 / Af293)</name>
    <name type="common">Neosartorya fumigata</name>
    <dbReference type="NCBI Taxonomy" id="330879"/>
    <lineage>
        <taxon>Eukaryota</taxon>
        <taxon>Fungi</taxon>
        <taxon>Dikarya</taxon>
        <taxon>Ascomycota</taxon>
        <taxon>Pezizomycotina</taxon>
        <taxon>Eurotiomycetes</taxon>
        <taxon>Eurotiomycetidae</taxon>
        <taxon>Eurotiales</taxon>
        <taxon>Aspergillaceae</taxon>
        <taxon>Aspergillus</taxon>
        <taxon>Aspergillus subgen. Fumigati</taxon>
    </lineage>
</organism>
<evidence type="ECO:0000255" key="1">
    <source>
        <dbReference type="HAMAP-Rule" id="MF_03019"/>
    </source>
</evidence>
<proteinExistence type="inferred from homology"/>
<feature type="chain" id="PRO_0000361978" description="3-hydroxyanthranilate 3,4-dioxygenase 1">
    <location>
        <begin position="1"/>
        <end position="192"/>
    </location>
</feature>
<feature type="binding site" evidence="1">
    <location>
        <position position="50"/>
    </location>
    <ligand>
        <name>O2</name>
        <dbReference type="ChEBI" id="CHEBI:15379"/>
    </ligand>
</feature>
<feature type="binding site" evidence="1">
    <location>
        <position position="54"/>
    </location>
    <ligand>
        <name>Fe cation</name>
        <dbReference type="ChEBI" id="CHEBI:24875"/>
        <note>catalytic</note>
    </ligand>
</feature>
<feature type="binding site" evidence="1">
    <location>
        <position position="60"/>
    </location>
    <ligand>
        <name>Fe cation</name>
        <dbReference type="ChEBI" id="CHEBI:24875"/>
        <note>catalytic</note>
    </ligand>
</feature>
<feature type="binding site" evidence="1">
    <location>
        <position position="60"/>
    </location>
    <ligand>
        <name>substrate</name>
    </ligand>
</feature>
<feature type="binding site" evidence="1">
    <location>
        <position position="102"/>
    </location>
    <ligand>
        <name>Fe cation</name>
        <dbReference type="ChEBI" id="CHEBI:24875"/>
        <note>catalytic</note>
    </ligand>
</feature>
<feature type="binding site" evidence="1">
    <location>
        <position position="106"/>
    </location>
    <ligand>
        <name>substrate</name>
    </ligand>
</feature>
<feature type="binding site" evidence="1">
    <location>
        <position position="116"/>
    </location>
    <ligand>
        <name>substrate</name>
    </ligand>
</feature>
<feature type="binding site" evidence="1">
    <location>
        <position position="131"/>
    </location>
    <ligand>
        <name>a divalent metal cation</name>
        <dbReference type="ChEBI" id="CHEBI:60240"/>
    </ligand>
</feature>
<feature type="binding site" evidence="1">
    <location>
        <position position="134"/>
    </location>
    <ligand>
        <name>a divalent metal cation</name>
        <dbReference type="ChEBI" id="CHEBI:60240"/>
    </ligand>
</feature>
<feature type="binding site" evidence="1">
    <location>
        <position position="168"/>
    </location>
    <ligand>
        <name>a divalent metal cation</name>
        <dbReference type="ChEBI" id="CHEBI:60240"/>
    </ligand>
</feature>
<feature type="binding site" evidence="1">
    <location>
        <position position="171"/>
    </location>
    <ligand>
        <name>a divalent metal cation</name>
        <dbReference type="ChEBI" id="CHEBI:60240"/>
    </ligand>
</feature>
<comment type="function">
    <text evidence="1">Catalyzes the oxidative ring opening of 3-hydroxyanthranilate to 2-amino-3-carboxymuconate semialdehyde, which spontaneously cyclizes to quinolinate.</text>
</comment>
<comment type="catalytic activity">
    <reaction evidence="1">
        <text>3-hydroxyanthranilate + O2 = (2Z,4Z)-2-amino-3-carboxymuconate 6-semialdehyde</text>
        <dbReference type="Rhea" id="RHEA:17953"/>
        <dbReference type="ChEBI" id="CHEBI:15379"/>
        <dbReference type="ChEBI" id="CHEBI:36559"/>
        <dbReference type="ChEBI" id="CHEBI:77612"/>
        <dbReference type="EC" id="1.13.11.6"/>
    </reaction>
</comment>
<comment type="cofactor">
    <cofactor evidence="1">
        <name>Fe(2+)</name>
        <dbReference type="ChEBI" id="CHEBI:29033"/>
    </cofactor>
</comment>
<comment type="pathway">
    <text evidence="1">Cofactor biosynthesis; NAD(+) biosynthesis; quinolinate from L-kynurenine: step 3/3.</text>
</comment>
<comment type="subcellular location">
    <subcellularLocation>
        <location evidence="1">Cytoplasm</location>
    </subcellularLocation>
</comment>
<comment type="similarity">
    <text evidence="1">Belongs to the 3-HAO family.</text>
</comment>
<protein>
    <recommendedName>
        <fullName evidence="1">3-hydroxyanthranilate 3,4-dioxygenase 1</fullName>
        <ecNumber evidence="1">1.13.11.6</ecNumber>
    </recommendedName>
    <alternativeName>
        <fullName evidence="1">3-hydroxyanthranilate oxygenase 1</fullName>
        <shortName evidence="1">3-HAO-1</shortName>
    </alternativeName>
    <alternativeName>
        <fullName evidence="1">3-hydroxyanthranilic acid dioxygenase 1</fullName>
        <shortName evidence="1">HAD-1</shortName>
    </alternativeName>
    <alternativeName>
        <fullName evidence="1">Biosynthesis of nicotinic acid protein 1-1</fullName>
    </alternativeName>
</protein>
<sequence length="192" mass="21705">MLPPALNIPKWLEENSHLLQPPVNNYCVYHPSSPATAGYTVMIVGGPNARTDYHINTTPEFFYQYRGSMLLKTVDTSVSPPVFQDIPIHEGSIFLLPANTPHCPVRFKDTVGVVMEQPRPKDAVDTMLWFCKKCGEVVWEKRFVCTDLGTQVKEVVEEFAADQEKRTCKACGTIAETRYQEGEVVQPPRFLE</sequence>
<gene>
    <name type="primary">bna1-1</name>
    <name type="ORF">AFUA_8G04650</name>
</gene>
<name>3HAO1_ASPFU</name>
<keyword id="KW-0963">Cytoplasm</keyword>
<keyword id="KW-0223">Dioxygenase</keyword>
<keyword id="KW-0408">Iron</keyword>
<keyword id="KW-0479">Metal-binding</keyword>
<keyword id="KW-0560">Oxidoreductase</keyword>
<keyword id="KW-0662">Pyridine nucleotide biosynthesis</keyword>
<keyword id="KW-1185">Reference proteome</keyword>
<dbReference type="EC" id="1.13.11.6" evidence="1"/>
<dbReference type="EMBL" id="AAHF01000013">
    <property type="protein sequence ID" value="EAL85233.1"/>
    <property type="molecule type" value="Genomic_DNA"/>
</dbReference>
<dbReference type="RefSeq" id="XP_747271.1">
    <property type="nucleotide sequence ID" value="XM_742178.1"/>
</dbReference>
<dbReference type="SMR" id="Q4WCF1"/>
<dbReference type="FunCoup" id="Q4WCF1">
    <property type="interactions" value="143"/>
</dbReference>
<dbReference type="STRING" id="330879.Q4WCF1"/>
<dbReference type="EnsemblFungi" id="EAL85233">
    <property type="protein sequence ID" value="EAL85233"/>
    <property type="gene ID" value="AFUA_8G04650"/>
</dbReference>
<dbReference type="GeneID" id="3504643"/>
<dbReference type="KEGG" id="afm:AFUA_8G04650"/>
<dbReference type="VEuPathDB" id="FungiDB:Afu8g04650"/>
<dbReference type="eggNOG" id="KOG3995">
    <property type="taxonomic scope" value="Eukaryota"/>
</dbReference>
<dbReference type="HOGENOM" id="CLU_095765_0_0_1"/>
<dbReference type="InParanoid" id="Q4WCF1"/>
<dbReference type="OMA" id="KPPVGNQ"/>
<dbReference type="OrthoDB" id="204928at2759"/>
<dbReference type="UniPathway" id="UPA00253">
    <property type="reaction ID" value="UER00330"/>
</dbReference>
<dbReference type="Proteomes" id="UP000002530">
    <property type="component" value="Chromosome 8"/>
</dbReference>
<dbReference type="GO" id="GO:0005737">
    <property type="term" value="C:cytoplasm"/>
    <property type="evidence" value="ECO:0000318"/>
    <property type="project" value="GO_Central"/>
</dbReference>
<dbReference type="GO" id="GO:0000334">
    <property type="term" value="F:3-hydroxyanthranilate 3,4-dioxygenase activity"/>
    <property type="evidence" value="ECO:0000318"/>
    <property type="project" value="GO_Central"/>
</dbReference>
<dbReference type="GO" id="GO:0008198">
    <property type="term" value="F:ferrous iron binding"/>
    <property type="evidence" value="ECO:0007669"/>
    <property type="project" value="UniProtKB-UniRule"/>
</dbReference>
<dbReference type="GO" id="GO:0034354">
    <property type="term" value="P:'de novo' NAD biosynthetic process from L-tryptophan"/>
    <property type="evidence" value="ECO:0000318"/>
    <property type="project" value="GO_Central"/>
</dbReference>
<dbReference type="GO" id="GO:0043420">
    <property type="term" value="P:anthranilate metabolic process"/>
    <property type="evidence" value="ECO:0007669"/>
    <property type="project" value="UniProtKB-UniRule"/>
</dbReference>
<dbReference type="GO" id="GO:0006569">
    <property type="term" value="P:L-tryptophan catabolic process"/>
    <property type="evidence" value="ECO:0007669"/>
    <property type="project" value="UniProtKB-UniRule"/>
</dbReference>
<dbReference type="GO" id="GO:0019805">
    <property type="term" value="P:quinolinate biosynthetic process"/>
    <property type="evidence" value="ECO:0007669"/>
    <property type="project" value="UniProtKB-UniRule"/>
</dbReference>
<dbReference type="GO" id="GO:0046874">
    <property type="term" value="P:quinolinate metabolic process"/>
    <property type="evidence" value="ECO:0000318"/>
    <property type="project" value="GO_Central"/>
</dbReference>
<dbReference type="CDD" id="cd06123">
    <property type="entry name" value="cupin_HAO"/>
    <property type="match status" value="1"/>
</dbReference>
<dbReference type="FunFam" id="2.60.120.10:FF:000093">
    <property type="entry name" value="3-hydroxyanthranilate 3,4-dioxygenase"/>
    <property type="match status" value="1"/>
</dbReference>
<dbReference type="Gene3D" id="2.60.120.10">
    <property type="entry name" value="Jelly Rolls"/>
    <property type="match status" value="1"/>
</dbReference>
<dbReference type="HAMAP" id="MF_00825">
    <property type="entry name" value="3_HAO"/>
    <property type="match status" value="1"/>
</dbReference>
<dbReference type="InterPro" id="IPR010329">
    <property type="entry name" value="3hydroanth_dOase"/>
</dbReference>
<dbReference type="InterPro" id="IPR014710">
    <property type="entry name" value="RmlC-like_jellyroll"/>
</dbReference>
<dbReference type="InterPro" id="IPR011051">
    <property type="entry name" value="RmlC_Cupin_sf"/>
</dbReference>
<dbReference type="NCBIfam" id="TIGR03037">
    <property type="entry name" value="anthran_nbaC"/>
    <property type="match status" value="1"/>
</dbReference>
<dbReference type="PANTHER" id="PTHR15497">
    <property type="entry name" value="3-HYDROXYANTHRANILATE 3,4-DIOXYGENASE"/>
    <property type="match status" value="1"/>
</dbReference>
<dbReference type="PANTHER" id="PTHR15497:SF1">
    <property type="entry name" value="3-HYDROXYANTHRANILATE 3,4-DIOXYGENASE"/>
    <property type="match status" value="1"/>
</dbReference>
<dbReference type="Pfam" id="PF06052">
    <property type="entry name" value="3-HAO"/>
    <property type="match status" value="1"/>
</dbReference>
<dbReference type="SUPFAM" id="SSF51182">
    <property type="entry name" value="RmlC-like cupins"/>
    <property type="match status" value="1"/>
</dbReference>
<accession>Q4WCF1</accession>
<reference key="1">
    <citation type="journal article" date="2005" name="Nature">
        <title>Genomic sequence of the pathogenic and allergenic filamentous fungus Aspergillus fumigatus.</title>
        <authorList>
            <person name="Nierman W.C."/>
            <person name="Pain A."/>
            <person name="Anderson M.J."/>
            <person name="Wortman J.R."/>
            <person name="Kim H.S."/>
            <person name="Arroyo J."/>
            <person name="Berriman M."/>
            <person name="Abe K."/>
            <person name="Archer D.B."/>
            <person name="Bermejo C."/>
            <person name="Bennett J.W."/>
            <person name="Bowyer P."/>
            <person name="Chen D."/>
            <person name="Collins M."/>
            <person name="Coulsen R."/>
            <person name="Davies R."/>
            <person name="Dyer P.S."/>
            <person name="Farman M.L."/>
            <person name="Fedorova N."/>
            <person name="Fedorova N.D."/>
            <person name="Feldblyum T.V."/>
            <person name="Fischer R."/>
            <person name="Fosker N."/>
            <person name="Fraser A."/>
            <person name="Garcia J.L."/>
            <person name="Garcia M.J."/>
            <person name="Goble A."/>
            <person name="Goldman G.H."/>
            <person name="Gomi K."/>
            <person name="Griffith-Jones S."/>
            <person name="Gwilliam R."/>
            <person name="Haas B.J."/>
            <person name="Haas H."/>
            <person name="Harris D.E."/>
            <person name="Horiuchi H."/>
            <person name="Huang J."/>
            <person name="Humphray S."/>
            <person name="Jimenez J."/>
            <person name="Keller N."/>
            <person name="Khouri H."/>
            <person name="Kitamoto K."/>
            <person name="Kobayashi T."/>
            <person name="Konzack S."/>
            <person name="Kulkarni R."/>
            <person name="Kumagai T."/>
            <person name="Lafton A."/>
            <person name="Latge J.-P."/>
            <person name="Li W."/>
            <person name="Lord A."/>
            <person name="Lu C."/>
            <person name="Majoros W.H."/>
            <person name="May G.S."/>
            <person name="Miller B.L."/>
            <person name="Mohamoud Y."/>
            <person name="Molina M."/>
            <person name="Monod M."/>
            <person name="Mouyna I."/>
            <person name="Mulligan S."/>
            <person name="Murphy L.D."/>
            <person name="O'Neil S."/>
            <person name="Paulsen I."/>
            <person name="Penalva M.A."/>
            <person name="Pertea M."/>
            <person name="Price C."/>
            <person name="Pritchard B.L."/>
            <person name="Quail M.A."/>
            <person name="Rabbinowitsch E."/>
            <person name="Rawlins N."/>
            <person name="Rajandream M.A."/>
            <person name="Reichard U."/>
            <person name="Renauld H."/>
            <person name="Robson G.D."/>
            <person name="Rodriguez de Cordoba S."/>
            <person name="Rodriguez-Pena J.M."/>
            <person name="Ronning C.M."/>
            <person name="Rutter S."/>
            <person name="Salzberg S.L."/>
            <person name="Sanchez M."/>
            <person name="Sanchez-Ferrero J.C."/>
            <person name="Saunders D."/>
            <person name="Seeger K."/>
            <person name="Squares R."/>
            <person name="Squares S."/>
            <person name="Takeuchi M."/>
            <person name="Tekaia F."/>
            <person name="Turner G."/>
            <person name="Vazquez de Aldana C.R."/>
            <person name="Weidman J."/>
            <person name="White O."/>
            <person name="Woodward J.R."/>
            <person name="Yu J.-H."/>
            <person name="Fraser C.M."/>
            <person name="Galagan J.E."/>
            <person name="Asai K."/>
            <person name="Machida M."/>
            <person name="Hall N."/>
            <person name="Barrell B.G."/>
            <person name="Denning D.W."/>
        </authorList>
    </citation>
    <scope>NUCLEOTIDE SEQUENCE [LARGE SCALE GENOMIC DNA]</scope>
    <source>
        <strain>ATCC MYA-4609 / CBS 101355 / FGSC A1100 / Af293</strain>
    </source>
</reference>